<keyword id="KW-0312">Gluconeogenesis</keyword>
<keyword id="KW-0324">Glycolysis</keyword>
<keyword id="KW-0413">Isomerase</keyword>
<feature type="chain" id="PRO_1000064090" description="2,3-bisphosphoglycerate-dependent phosphoglycerate mutase">
    <location>
        <begin position="1"/>
        <end position="211"/>
    </location>
</feature>
<feature type="active site" description="Tele-phosphohistidine intermediate" evidence="1">
    <location>
        <position position="10"/>
    </location>
</feature>
<feature type="active site" description="Proton donor/acceptor" evidence="1">
    <location>
        <position position="88"/>
    </location>
</feature>
<feature type="binding site" evidence="1">
    <location>
        <begin position="9"/>
        <end position="16"/>
    </location>
    <ligand>
        <name>substrate</name>
    </ligand>
</feature>
<feature type="binding site" evidence="1">
    <location>
        <begin position="22"/>
        <end position="23"/>
    </location>
    <ligand>
        <name>substrate</name>
    </ligand>
</feature>
<feature type="binding site" evidence="1">
    <location>
        <position position="61"/>
    </location>
    <ligand>
        <name>substrate</name>
    </ligand>
</feature>
<feature type="binding site" evidence="1">
    <location>
        <begin position="88"/>
        <end position="91"/>
    </location>
    <ligand>
        <name>substrate</name>
    </ligand>
</feature>
<feature type="binding site" evidence="1">
    <location>
        <position position="99"/>
    </location>
    <ligand>
        <name>substrate</name>
    </ligand>
</feature>
<feature type="binding site" evidence="1">
    <location>
        <begin position="115"/>
        <end position="116"/>
    </location>
    <ligand>
        <name>substrate</name>
    </ligand>
</feature>
<feature type="binding site" evidence="1">
    <location>
        <begin position="159"/>
        <end position="160"/>
    </location>
    <ligand>
        <name>substrate</name>
    </ligand>
</feature>
<feature type="site" description="Transition state stabilizer" evidence="1">
    <location>
        <position position="158"/>
    </location>
</feature>
<dbReference type="EC" id="5.4.2.11" evidence="1"/>
<dbReference type="EMBL" id="AM236080">
    <property type="protein sequence ID" value="CAK05668.1"/>
    <property type="molecule type" value="Genomic_DNA"/>
</dbReference>
<dbReference type="RefSeq" id="WP_011649992.1">
    <property type="nucleotide sequence ID" value="NC_008380.1"/>
</dbReference>
<dbReference type="SMR" id="Q1MMY4"/>
<dbReference type="EnsemblBacteria" id="CAK05668">
    <property type="protein sequence ID" value="CAK05668"/>
    <property type="gene ID" value="RL0179"/>
</dbReference>
<dbReference type="KEGG" id="rle:RL0179"/>
<dbReference type="eggNOG" id="COG0588">
    <property type="taxonomic scope" value="Bacteria"/>
</dbReference>
<dbReference type="HOGENOM" id="CLU_033323_1_4_5"/>
<dbReference type="UniPathway" id="UPA00109">
    <property type="reaction ID" value="UER00186"/>
</dbReference>
<dbReference type="Proteomes" id="UP000006575">
    <property type="component" value="Chromosome"/>
</dbReference>
<dbReference type="GO" id="GO:0004619">
    <property type="term" value="F:phosphoglycerate mutase activity"/>
    <property type="evidence" value="ECO:0007669"/>
    <property type="project" value="UniProtKB-EC"/>
</dbReference>
<dbReference type="GO" id="GO:0006094">
    <property type="term" value="P:gluconeogenesis"/>
    <property type="evidence" value="ECO:0007669"/>
    <property type="project" value="UniProtKB-UniRule"/>
</dbReference>
<dbReference type="GO" id="GO:0006096">
    <property type="term" value="P:glycolytic process"/>
    <property type="evidence" value="ECO:0007669"/>
    <property type="project" value="UniProtKB-UniRule"/>
</dbReference>
<dbReference type="CDD" id="cd07067">
    <property type="entry name" value="HP_PGM_like"/>
    <property type="match status" value="1"/>
</dbReference>
<dbReference type="Gene3D" id="3.40.50.1240">
    <property type="entry name" value="Phosphoglycerate mutase-like"/>
    <property type="match status" value="1"/>
</dbReference>
<dbReference type="HAMAP" id="MF_01039">
    <property type="entry name" value="PGAM_GpmA"/>
    <property type="match status" value="1"/>
</dbReference>
<dbReference type="InterPro" id="IPR013078">
    <property type="entry name" value="His_Pase_superF_clade-1"/>
</dbReference>
<dbReference type="InterPro" id="IPR029033">
    <property type="entry name" value="His_PPase_superfam"/>
</dbReference>
<dbReference type="InterPro" id="IPR001345">
    <property type="entry name" value="PG/BPGM_mutase_AS"/>
</dbReference>
<dbReference type="InterPro" id="IPR005952">
    <property type="entry name" value="Phosphogly_mut1"/>
</dbReference>
<dbReference type="NCBIfam" id="TIGR01258">
    <property type="entry name" value="pgm_1"/>
    <property type="match status" value="1"/>
</dbReference>
<dbReference type="NCBIfam" id="NF002339">
    <property type="entry name" value="PRK01295.1"/>
    <property type="match status" value="1"/>
</dbReference>
<dbReference type="PANTHER" id="PTHR11931">
    <property type="entry name" value="PHOSPHOGLYCERATE MUTASE"/>
    <property type="match status" value="1"/>
</dbReference>
<dbReference type="Pfam" id="PF00300">
    <property type="entry name" value="His_Phos_1"/>
    <property type="match status" value="1"/>
</dbReference>
<dbReference type="PIRSF" id="PIRSF000709">
    <property type="entry name" value="6PFK_2-Ptase"/>
    <property type="match status" value="1"/>
</dbReference>
<dbReference type="SMART" id="SM00855">
    <property type="entry name" value="PGAM"/>
    <property type="match status" value="1"/>
</dbReference>
<dbReference type="SUPFAM" id="SSF53254">
    <property type="entry name" value="Phosphoglycerate mutase-like"/>
    <property type="match status" value="1"/>
</dbReference>
<dbReference type="PROSITE" id="PS00175">
    <property type="entry name" value="PG_MUTASE"/>
    <property type="match status" value="1"/>
</dbReference>
<organism>
    <name type="scientific">Rhizobium johnstonii (strain DSM 114642 / LMG 32736 / 3841)</name>
    <name type="common">Rhizobium leguminosarum bv. viciae</name>
    <dbReference type="NCBI Taxonomy" id="216596"/>
    <lineage>
        <taxon>Bacteria</taxon>
        <taxon>Pseudomonadati</taxon>
        <taxon>Pseudomonadota</taxon>
        <taxon>Alphaproteobacteria</taxon>
        <taxon>Hyphomicrobiales</taxon>
        <taxon>Rhizobiaceae</taxon>
        <taxon>Rhizobium/Agrobacterium group</taxon>
        <taxon>Rhizobium</taxon>
        <taxon>Rhizobium johnstonii</taxon>
    </lineage>
</organism>
<gene>
    <name evidence="1" type="primary">gpmA</name>
    <name type="ordered locus">RL0179</name>
</gene>
<accession>Q1MMY4</accession>
<reference key="1">
    <citation type="journal article" date="2006" name="Genome Biol.">
        <title>The genome of Rhizobium leguminosarum has recognizable core and accessory components.</title>
        <authorList>
            <person name="Young J.P.W."/>
            <person name="Crossman L.C."/>
            <person name="Johnston A.W.B."/>
            <person name="Thomson N.R."/>
            <person name="Ghazoui Z.F."/>
            <person name="Hull K.H."/>
            <person name="Wexler M."/>
            <person name="Curson A.R.J."/>
            <person name="Todd J.D."/>
            <person name="Poole P.S."/>
            <person name="Mauchline T.H."/>
            <person name="East A.K."/>
            <person name="Quail M.A."/>
            <person name="Churcher C."/>
            <person name="Arrowsmith C."/>
            <person name="Cherevach I."/>
            <person name="Chillingworth T."/>
            <person name="Clarke K."/>
            <person name="Cronin A."/>
            <person name="Davis P."/>
            <person name="Fraser A."/>
            <person name="Hance Z."/>
            <person name="Hauser H."/>
            <person name="Jagels K."/>
            <person name="Moule S."/>
            <person name="Mungall K."/>
            <person name="Norbertczak H."/>
            <person name="Rabbinowitsch E."/>
            <person name="Sanders M."/>
            <person name="Simmonds M."/>
            <person name="Whitehead S."/>
            <person name="Parkhill J."/>
        </authorList>
    </citation>
    <scope>NUCLEOTIDE SEQUENCE [LARGE SCALE GENOMIC DNA]</scope>
    <source>
        <strain>DSM 114642 / LMG 32736 / 3841</strain>
    </source>
</reference>
<sequence length="211" mass="23235">MSGTLVLVRHGQSDWNLKNLFTGWKDPDLTELGIQEANTGGAALAEYGIKFDVAYTSVLVRAQHTLKLILDKVGQPDLLTIRDQALNERDYGDLSGLNKDDARAKWGEEQVHIWRRSYDVPPPGGESLRDTGARVWPYYLTEILPRVLRGEKVLVAAHGNSLRSLVMVLDKLSREGVLALNLATGVPMVYKLKADSTVASKEVLGDMSGAH</sequence>
<proteinExistence type="inferred from homology"/>
<comment type="function">
    <text evidence="1">Catalyzes the interconversion of 2-phosphoglycerate and 3-phosphoglycerate.</text>
</comment>
<comment type="catalytic activity">
    <reaction evidence="1">
        <text>(2R)-2-phosphoglycerate = (2R)-3-phosphoglycerate</text>
        <dbReference type="Rhea" id="RHEA:15901"/>
        <dbReference type="ChEBI" id="CHEBI:58272"/>
        <dbReference type="ChEBI" id="CHEBI:58289"/>
        <dbReference type="EC" id="5.4.2.11"/>
    </reaction>
</comment>
<comment type="pathway">
    <text evidence="1">Carbohydrate degradation; glycolysis; pyruvate from D-glyceraldehyde 3-phosphate: step 3/5.</text>
</comment>
<comment type="subunit">
    <text evidence="1">Homodimer.</text>
</comment>
<comment type="similarity">
    <text evidence="1">Belongs to the phosphoglycerate mutase family. BPG-dependent PGAM subfamily.</text>
</comment>
<protein>
    <recommendedName>
        <fullName evidence="1">2,3-bisphosphoglycerate-dependent phosphoglycerate mutase</fullName>
        <shortName evidence="1">BPG-dependent PGAM</shortName>
        <shortName evidence="1">PGAM</shortName>
        <shortName evidence="1">Phosphoglyceromutase</shortName>
        <shortName evidence="1">dPGM</shortName>
        <ecNumber evidence="1">5.4.2.11</ecNumber>
    </recommendedName>
</protein>
<name>GPMA_RHIJ3</name>
<evidence type="ECO:0000255" key="1">
    <source>
        <dbReference type="HAMAP-Rule" id="MF_01039"/>
    </source>
</evidence>